<organismHost>
    <name type="scientific">Acheta domesticus</name>
    <name type="common">House cricket</name>
    <dbReference type="NCBI Taxonomy" id="6997"/>
</organismHost>
<organismHost>
    <name type="scientific">Chilo suppressalis</name>
    <name type="common">Asiatic rice borer moth</name>
    <dbReference type="NCBI Taxonomy" id="168631"/>
</organismHost>
<organismHost>
    <name type="scientific">Gryllus bimaculatus</name>
    <name type="common">Two-spotted cricket</name>
    <dbReference type="NCBI Taxonomy" id="6999"/>
</organismHost>
<organismHost>
    <name type="scientific">Gryllus campestris</name>
    <dbReference type="NCBI Taxonomy" id="58607"/>
</organismHost>
<organismHost>
    <name type="scientific">Spodoptera frugiperda</name>
    <name type="common">Fall armyworm</name>
    <dbReference type="NCBI Taxonomy" id="7108"/>
</organismHost>
<name>284R_IIV6</name>
<reference key="1">
    <citation type="journal article" date="2001" name="Virology">
        <title>Analysis of the first complete DNA sequence of an invertebrate iridovirus: coding strategy of the genome of Chilo iridescent virus.</title>
        <authorList>
            <person name="Jakob N.J."/>
            <person name="Mueller K."/>
            <person name="Bahr U."/>
            <person name="Darai G."/>
        </authorList>
    </citation>
    <scope>NUCLEOTIDE SEQUENCE [LARGE SCALE GENOMIC DNA]</scope>
</reference>
<reference key="2">
    <citation type="journal article" date="2007" name="Virol. J.">
        <title>Comparative genomic analysis of the family Iridoviridae: re-annotating and defining the core set of iridovirus genes.</title>
        <authorList>
            <person name="Eaton H.E."/>
            <person name="Metcalf J."/>
            <person name="Penny E."/>
            <person name="Tcherepanov V."/>
            <person name="Upton C."/>
            <person name="Brunetti C.R."/>
        </authorList>
    </citation>
    <scope>GENOME REANNOTATION</scope>
</reference>
<keyword id="KW-1185">Reference proteome</keyword>
<proteinExistence type="predicted"/>
<protein>
    <recommendedName>
        <fullName>Uncharacterized protein 284R</fullName>
    </recommendedName>
</protein>
<feature type="chain" id="PRO_0000377841" description="Uncharacterized protein 284R">
    <location>
        <begin position="1"/>
        <end position="148"/>
    </location>
</feature>
<sequence>MDKYTIRQLFMYLSDNQYVYCRKCIFTPLRGDLNDCKNCPQSYSKNKDIIWFLTPPTTPTNYYNYLKDSHDYKQSCIETRVIVDFCVWCSLTNTMRTKNILNEFFKTYKNGTLHSSTKLNVIDTMNDLGFFNNNFKLIDEDASEFENY</sequence>
<organism>
    <name type="scientific">Invertebrate iridescent virus 6</name>
    <name type="common">IIV-6</name>
    <name type="synonym">Chilo iridescent virus</name>
    <dbReference type="NCBI Taxonomy" id="176652"/>
    <lineage>
        <taxon>Viruses</taxon>
        <taxon>Varidnaviria</taxon>
        <taxon>Bamfordvirae</taxon>
        <taxon>Nucleocytoviricota</taxon>
        <taxon>Megaviricetes</taxon>
        <taxon>Pimascovirales</taxon>
        <taxon>Iridoviridae</taxon>
        <taxon>Betairidovirinae</taxon>
        <taxon>Iridovirus</taxon>
    </lineage>
</organism>
<gene>
    <name type="ORF">IIV6-284R</name>
</gene>
<dbReference type="EMBL" id="AF303741">
    <property type="protein sequence ID" value="AAK82145.1"/>
    <property type="molecule type" value="Genomic_DNA"/>
</dbReference>
<dbReference type="RefSeq" id="NP_149747.1">
    <property type="nucleotide sequence ID" value="NC_003038.1"/>
</dbReference>
<dbReference type="KEGG" id="vg:1733376"/>
<dbReference type="Proteomes" id="UP000001359">
    <property type="component" value="Genome"/>
</dbReference>
<accession>Q91FP0</accession>